<evidence type="ECO:0000250" key="1">
    <source>
        <dbReference type="UniProtKB" id="Q12527"/>
    </source>
</evidence>
<evidence type="ECO:0000255" key="2"/>
<evidence type="ECO:0000269" key="3">
    <source>
    </source>
</evidence>
<evidence type="ECO:0000269" key="4">
    <source>
    </source>
</evidence>
<evidence type="ECO:0000303" key="5">
    <source>
    </source>
</evidence>
<evidence type="ECO:0000305" key="6"/>
<dbReference type="EMBL" id="CP017626">
    <property type="protein sequence ID" value="AOW28951.1"/>
    <property type="molecule type" value="Genomic_DNA"/>
</dbReference>
<dbReference type="RefSeq" id="XP_722686.1">
    <property type="nucleotide sequence ID" value="XM_717593.2"/>
</dbReference>
<dbReference type="SMR" id="Q5AMN3"/>
<dbReference type="FunCoup" id="Q5AMN3">
    <property type="interactions" value="166"/>
</dbReference>
<dbReference type="STRING" id="237561.Q5AMN3"/>
<dbReference type="EnsemblFungi" id="C4_01790W_A-T">
    <property type="protein sequence ID" value="C4_01790W_A-T-p1"/>
    <property type="gene ID" value="C4_01790W_A"/>
</dbReference>
<dbReference type="GeneID" id="3635597"/>
<dbReference type="KEGG" id="cal:CAALFM_C401790WA"/>
<dbReference type="CGD" id="CAL0000186587">
    <property type="gene designation" value="ATG11"/>
</dbReference>
<dbReference type="VEuPathDB" id="FungiDB:C4_01790W_A"/>
<dbReference type="eggNOG" id="ENOG502QVZE">
    <property type="taxonomic scope" value="Eukaryota"/>
</dbReference>
<dbReference type="HOGENOM" id="CLU_002803_1_0_1"/>
<dbReference type="InParanoid" id="Q5AMN3"/>
<dbReference type="OMA" id="EIDVHYF"/>
<dbReference type="OrthoDB" id="447953at2759"/>
<dbReference type="PRO" id="PR:Q5AMN3"/>
<dbReference type="Proteomes" id="UP000000559">
    <property type="component" value="Chromosome 4"/>
</dbReference>
<dbReference type="GO" id="GO:1990316">
    <property type="term" value="C:Atg1/ULK1 kinase complex"/>
    <property type="evidence" value="ECO:0000318"/>
    <property type="project" value="GO_Central"/>
</dbReference>
<dbReference type="GO" id="GO:0034045">
    <property type="term" value="C:phagophore assembly site membrane"/>
    <property type="evidence" value="ECO:0000318"/>
    <property type="project" value="GO_Central"/>
</dbReference>
<dbReference type="GO" id="GO:0060090">
    <property type="term" value="F:molecular adaptor activity"/>
    <property type="evidence" value="ECO:0000318"/>
    <property type="project" value="GO_Central"/>
</dbReference>
<dbReference type="GO" id="GO:0019901">
    <property type="term" value="F:protein kinase binding"/>
    <property type="evidence" value="ECO:0000318"/>
    <property type="project" value="GO_Central"/>
</dbReference>
<dbReference type="GO" id="GO:0000045">
    <property type="term" value="P:autophagosome assembly"/>
    <property type="evidence" value="ECO:0000318"/>
    <property type="project" value="GO_Central"/>
</dbReference>
<dbReference type="GO" id="GO:0000422">
    <property type="term" value="P:autophagy of mitochondrion"/>
    <property type="evidence" value="ECO:0000318"/>
    <property type="project" value="GO_Central"/>
</dbReference>
<dbReference type="GO" id="GO:0006995">
    <property type="term" value="P:cellular response to nitrogen starvation"/>
    <property type="evidence" value="ECO:0000315"/>
    <property type="project" value="CGD"/>
</dbReference>
<dbReference type="GO" id="GO:0006974">
    <property type="term" value="P:DNA damage response"/>
    <property type="evidence" value="ECO:0000315"/>
    <property type="project" value="CGD"/>
</dbReference>
<dbReference type="GO" id="GO:0000423">
    <property type="term" value="P:mitophagy"/>
    <property type="evidence" value="ECO:0000315"/>
    <property type="project" value="CGD"/>
</dbReference>
<dbReference type="GO" id="GO:0000425">
    <property type="term" value="P:pexophagy"/>
    <property type="evidence" value="ECO:0000318"/>
    <property type="project" value="GO_Central"/>
</dbReference>
<dbReference type="GO" id="GO:0034727">
    <property type="term" value="P:piecemeal microautophagy of the nucleus"/>
    <property type="evidence" value="ECO:0000318"/>
    <property type="project" value="GO_Central"/>
</dbReference>
<dbReference type="GO" id="GO:0015031">
    <property type="term" value="P:protein transport"/>
    <property type="evidence" value="ECO:0007669"/>
    <property type="project" value="UniProtKB-KW"/>
</dbReference>
<dbReference type="GO" id="GO:0061709">
    <property type="term" value="P:reticulophagy"/>
    <property type="evidence" value="ECO:0000318"/>
    <property type="project" value="GO_Central"/>
</dbReference>
<dbReference type="GO" id="GO:0034517">
    <property type="term" value="P:ribophagy"/>
    <property type="evidence" value="ECO:0000318"/>
    <property type="project" value="GO_Central"/>
</dbReference>
<dbReference type="InterPro" id="IPR040040">
    <property type="entry name" value="ATG11"/>
</dbReference>
<dbReference type="InterPro" id="IPR019460">
    <property type="entry name" value="Atg11_C"/>
</dbReference>
<dbReference type="InterPro" id="IPR045326">
    <property type="entry name" value="ATG17-like_dom"/>
</dbReference>
<dbReference type="PANTHER" id="PTHR13222">
    <property type="entry name" value="RB1-INDUCIBLE COILED-COIL"/>
    <property type="match status" value="1"/>
</dbReference>
<dbReference type="PANTHER" id="PTHR13222:SF1">
    <property type="entry name" value="RB1-INDUCIBLE COILED-COIL PROTEIN 1"/>
    <property type="match status" value="1"/>
</dbReference>
<dbReference type="Pfam" id="PF10377">
    <property type="entry name" value="ATG11"/>
    <property type="match status" value="1"/>
</dbReference>
<dbReference type="Pfam" id="PF04108">
    <property type="entry name" value="ATG17_like"/>
    <property type="match status" value="1"/>
</dbReference>
<reference key="1">
    <citation type="journal article" date="2004" name="Proc. Natl. Acad. Sci. U.S.A.">
        <title>The diploid genome sequence of Candida albicans.</title>
        <authorList>
            <person name="Jones T."/>
            <person name="Federspiel N.A."/>
            <person name="Chibana H."/>
            <person name="Dungan J."/>
            <person name="Kalman S."/>
            <person name="Magee B.B."/>
            <person name="Newport G."/>
            <person name="Thorstenson Y.R."/>
            <person name="Agabian N."/>
            <person name="Magee P.T."/>
            <person name="Davis R.W."/>
            <person name="Scherer S."/>
        </authorList>
    </citation>
    <scope>NUCLEOTIDE SEQUENCE [LARGE SCALE GENOMIC DNA]</scope>
    <source>
        <strain>SC5314 / ATCC MYA-2876</strain>
    </source>
</reference>
<reference key="2">
    <citation type="journal article" date="2007" name="Genome Biol.">
        <title>Assembly of the Candida albicans genome into sixteen supercontigs aligned on the eight chromosomes.</title>
        <authorList>
            <person name="van het Hoog M."/>
            <person name="Rast T.J."/>
            <person name="Martchenko M."/>
            <person name="Grindle S."/>
            <person name="Dignard D."/>
            <person name="Hogues H."/>
            <person name="Cuomo C."/>
            <person name="Berriman M."/>
            <person name="Scherer S."/>
            <person name="Magee B.B."/>
            <person name="Whiteway M."/>
            <person name="Chibana H."/>
            <person name="Nantel A."/>
            <person name="Magee P.T."/>
        </authorList>
    </citation>
    <scope>GENOME REANNOTATION</scope>
    <source>
        <strain>SC5314 / ATCC MYA-2876</strain>
    </source>
</reference>
<reference key="3">
    <citation type="journal article" date="2013" name="Genome Biol.">
        <title>Assembly of a phased diploid Candida albicans genome facilitates allele-specific measurements and provides a simple model for repeat and indel structure.</title>
        <authorList>
            <person name="Muzzey D."/>
            <person name="Schwartz K."/>
            <person name="Weissman J.S."/>
            <person name="Sherlock G."/>
        </authorList>
    </citation>
    <scope>NUCLEOTIDE SEQUENCE [LARGE SCALE GENOMIC DNA]</scope>
    <scope>GENOME REANNOTATION</scope>
    <source>
        <strain>SC5314 / ATCC MYA-2876</strain>
    </source>
</reference>
<reference key="4">
    <citation type="journal article" date="2012" name="Cell">
        <title>A recently evolved transcriptional network controls biofilm development in Candida albicans.</title>
        <authorList>
            <person name="Nobile C.J."/>
            <person name="Fox E.P."/>
            <person name="Nett J.E."/>
            <person name="Sorrells T.R."/>
            <person name="Mitrovich Q.M."/>
            <person name="Hernday A.D."/>
            <person name="Tuch B.B."/>
            <person name="Andes D.R."/>
            <person name="Johnson A.D."/>
        </authorList>
    </citation>
    <scope>INDUCTION</scope>
</reference>
<reference key="5">
    <citation type="journal article" date="2019" name="Biochem. Biophys. Res. Commun.">
        <title>Function of Atg11 in non-selective autophagy and selective autophagy of Candida albicans.</title>
        <authorList>
            <person name="Cui L."/>
            <person name="Zhao H."/>
            <person name="Yin Y."/>
            <person name="Liang C."/>
            <person name="Mao X."/>
            <person name="Liu Y."/>
            <person name="Yu Q."/>
            <person name="Li M."/>
        </authorList>
    </citation>
    <scope>FUNCTION</scope>
    <scope>DISRUPTION PHENOTYPE</scope>
</reference>
<gene>
    <name evidence="5" type="primary">ATG11</name>
    <name type="ordered locus">CAALFM_C401790WA</name>
    <name type="ORF">CaO19.12084</name>
    <name type="ORF">CaO19.4614</name>
</gene>
<keyword id="KW-0072">Autophagy</keyword>
<keyword id="KW-0175">Coiled coil</keyword>
<keyword id="KW-0472">Membrane</keyword>
<keyword id="KW-0653">Protein transport</keyword>
<keyword id="KW-1185">Reference proteome</keyword>
<keyword id="KW-0813">Transport</keyword>
<name>ATG11_CANAL</name>
<proteinExistence type="evidence at transcript level"/>
<accession>Q5AMN3</accession>
<accession>A0A1D8PLD3</accession>
<protein>
    <recommendedName>
        <fullName evidence="5">Autophagy-related protein 11</fullName>
    </recommendedName>
</protein>
<feature type="chain" id="PRO_0000124544" description="Autophagy-related protein 11">
    <location>
        <begin position="1"/>
        <end position="1165"/>
    </location>
</feature>
<feature type="coiled-coil region" evidence="2">
    <location>
        <begin position="239"/>
        <end position="304"/>
    </location>
</feature>
<feature type="coiled-coil region" evidence="2">
    <location>
        <begin position="670"/>
        <end position="853"/>
    </location>
</feature>
<comment type="function">
    <text evidence="1 4">Plays an essential role in both non-selective and selective autophagy such as mitophagy (PubMed:31284951). Recruits mitochondria for their selective degradation via autophagy (mitophagy) during starvation, through its interaction with ATG32 (By similarity). Works as scaffold proteins that recruit ATG proteins to the pre-autophagosome (PAS), the site of vesicle/autophagosome formation (By similarity). Required for ATG9 anterograde transport from the mitochondria to the PAS (By similarity).</text>
</comment>
<comment type="subunit">
    <text evidence="1">Homodimer and potential homooligomers.</text>
</comment>
<comment type="subcellular location">
    <subcellularLocation>
        <location evidence="1">Preautophagosomal structure membrane</location>
        <topology evidence="1">Peripheral membrane protein</topology>
    </subcellularLocation>
</comment>
<comment type="induction">
    <text evidence="3">Induced during biofilm formation.</text>
</comment>
<comment type="disruption phenotype">
    <text evidence="4">Impairs the transport and degradation of ATG8 (PubMed:31284951). Also suppresses the degradation of both LAP41 (the indicator of the cytoplasm-to-vacuole pathway) and CSP37 (the indicator of mitophagy) (PubMed:31284951).</text>
</comment>
<comment type="similarity">
    <text evidence="6">Belongs to the ATG11 family.</text>
</comment>
<organism>
    <name type="scientific">Candida albicans (strain SC5314 / ATCC MYA-2876)</name>
    <name type="common">Yeast</name>
    <dbReference type="NCBI Taxonomy" id="237561"/>
    <lineage>
        <taxon>Eukaryota</taxon>
        <taxon>Fungi</taxon>
        <taxon>Dikarya</taxon>
        <taxon>Ascomycota</taxon>
        <taxon>Saccharomycotina</taxon>
        <taxon>Pichiomycetes</taxon>
        <taxon>Debaryomycetaceae</taxon>
        <taxon>Candida/Lodderomyces clade</taxon>
        <taxon>Candida</taxon>
    </lineage>
</organism>
<sequence length="1165" mass="135262">MSEISYLSINNAHNGIIIKIPKPVRFHTLSEFKKYIQQSYSIDSVDNLFLLTTFGIKLNYNLINEIGEVFVYDKRLFTNIVDQSLIDQYTQSTFRVSEPTHSPLLKSNVGFLKQNLSSNLKINQGWARIITQDGELMDQYCRELIQQINVIFKCLNTIFQFATNFTNEIEKNFSNFFNYVKLINYKTLHKSWITNYKNLKTFPTFKIDNENIKLSDFLEVDRLQSSADYIEKFLPLIVNKLNELKQVIETVNEEKLTVDKFIETSRNESISNFKNVNISNVLSQLQTESQQLTDDIENLHYKNMDEIYRLHRDKLSISIYNNAKDIYKNLNDLQQFKNKLTKASLKAFNTIANLQMKMVGVKTEMKKITTEDETATEDSKVGDVNYKTISNVKKYEDYLSLTIDLPLIFGFSLIEKRRQFEWYDFYSKGIVNNVSEQLSTIIEHEKVFRGIWLKKFGTLLSLINDDPLTPSLPNIDVTLVGNRQNNFSILYDLKIERDDIINYISLIEATNMSKNFVTLLNKNFKDLIASTNNMKKVTKVISSLSTYTTNSADDKSKSSHEEGTEEEIDFDLNLIKGLKSRIKKLENLLHQQQFKNLNNWPVIRNVPSMTNDNRQSTIIQPTVVSPARTNPTQLLSRNPSTTKENTTTNIHNNHQQSEVLDSSVIDKHLDNIRLKKLNNELQTKNTELTNQINSKNETITQQQKEMEHMKLKTEKRVDELMKKLQEKDEECQSLKQENKIKCDEVENLTKKLELSDNHNKELEAKITEYTQKATSKTKEIADLNKTVSNLRSELGDAMHMKNDLLSNLSSKEAEFTKERNQFNNDLKALQLKLDEINEDYENLMELTQAKQKKHDLIINDLNNVIINLMNDIKKTLLSVFEYFLEYCLVLESMGLLLVKEDEIYKIKRVKGLKSKKSIGDGDMSIISNGTPSSKVIEEIENEINIVNNIPPISSILPDSYSSGTESDSVVDRYNDQSMKLISTFNQLFKFNNENENENRIDHILNTLAFKNNVQLQEDSINDTRFFLNAISKRFRDVEGFAKRQAKDNKLKEQEHRKLVHRLNSKISVNGFQEKDLVLFLPTRIDRPNGENIPSNDKIQPWAAFNIGAPHYFLKTEQTKNKEWIIGRVKKITEYKVTEENVQSLESNPFQLSVNVTWYLVEADEE</sequence>